<proteinExistence type="inferred from homology"/>
<sequence length="342" mass="37500">MIRVAINGFGRVGRNVLRALYETGQNKQIQIVAINELAEPEGVAHLLKYDTAHGRFRFPVVLDNQQLVVAGDHITLLQQENIRDLPWAQLDIDVVLECTGVNNERVHGEQHIAQGAKKVLFSQPCGPDVDATIIMGINEESLKASDSIVSAGSCTTNCIVPVIQVLDEAFSVSSGTITTIHSSMHDQQVIDAYHPDLRRTRAASQSIIPVDTKLARGIERVLPKFAGKFEAIAVRVPTINVSAMDLSVTLDAKVTIDDVNQALKTVKNGRLNGILDFTEEPLVSVDFNHDAHSCIVDGTQTRVSHKQLVKLLVWCDNEWGFSNRMIDIVLVMNTLSLGNTGK</sequence>
<organism>
    <name type="scientific">Pseudoalteromonas atlantica (strain T6c / ATCC BAA-1087)</name>
    <dbReference type="NCBI Taxonomy" id="3042615"/>
    <lineage>
        <taxon>Bacteria</taxon>
        <taxon>Pseudomonadati</taxon>
        <taxon>Pseudomonadota</taxon>
        <taxon>Gammaproteobacteria</taxon>
        <taxon>Alteromonadales</taxon>
        <taxon>Alteromonadaceae</taxon>
        <taxon>Paraglaciecola</taxon>
    </lineage>
</organism>
<name>E4PD_PSEA6</name>
<evidence type="ECO:0000255" key="1">
    <source>
        <dbReference type="HAMAP-Rule" id="MF_01640"/>
    </source>
</evidence>
<reference key="1">
    <citation type="submission" date="2006-06" db="EMBL/GenBank/DDBJ databases">
        <title>Complete sequence of Pseudoalteromonas atlantica T6c.</title>
        <authorList>
            <consortium name="US DOE Joint Genome Institute"/>
            <person name="Copeland A."/>
            <person name="Lucas S."/>
            <person name="Lapidus A."/>
            <person name="Barry K."/>
            <person name="Detter J.C."/>
            <person name="Glavina del Rio T."/>
            <person name="Hammon N."/>
            <person name="Israni S."/>
            <person name="Dalin E."/>
            <person name="Tice H."/>
            <person name="Pitluck S."/>
            <person name="Saunders E."/>
            <person name="Brettin T."/>
            <person name="Bruce D."/>
            <person name="Han C."/>
            <person name="Tapia R."/>
            <person name="Gilna P."/>
            <person name="Schmutz J."/>
            <person name="Larimer F."/>
            <person name="Land M."/>
            <person name="Hauser L."/>
            <person name="Kyrpides N."/>
            <person name="Kim E."/>
            <person name="Karls A.C."/>
            <person name="Bartlett D."/>
            <person name="Higgins B.P."/>
            <person name="Richardson P."/>
        </authorList>
    </citation>
    <scope>NUCLEOTIDE SEQUENCE [LARGE SCALE GENOMIC DNA]</scope>
    <source>
        <strain>T6c / ATCC BAA-1087</strain>
    </source>
</reference>
<comment type="function">
    <text evidence="1">Catalyzes the NAD-dependent conversion of D-erythrose 4-phosphate to 4-phosphoerythronate.</text>
</comment>
<comment type="catalytic activity">
    <reaction evidence="1">
        <text>D-erythrose 4-phosphate + NAD(+) + H2O = 4-phospho-D-erythronate + NADH + 2 H(+)</text>
        <dbReference type="Rhea" id="RHEA:12056"/>
        <dbReference type="ChEBI" id="CHEBI:15377"/>
        <dbReference type="ChEBI" id="CHEBI:15378"/>
        <dbReference type="ChEBI" id="CHEBI:16897"/>
        <dbReference type="ChEBI" id="CHEBI:57540"/>
        <dbReference type="ChEBI" id="CHEBI:57945"/>
        <dbReference type="ChEBI" id="CHEBI:58766"/>
        <dbReference type="EC" id="1.2.1.72"/>
    </reaction>
</comment>
<comment type="pathway">
    <text evidence="1">Cofactor biosynthesis; pyridoxine 5'-phosphate biosynthesis; pyridoxine 5'-phosphate from D-erythrose 4-phosphate: step 1/5.</text>
</comment>
<comment type="subunit">
    <text evidence="1">Homotetramer.</text>
</comment>
<comment type="subcellular location">
    <subcellularLocation>
        <location evidence="1">Cytoplasm</location>
    </subcellularLocation>
</comment>
<comment type="similarity">
    <text evidence="1">Belongs to the glyceraldehyde-3-phosphate dehydrogenase family. Epd subfamily.</text>
</comment>
<keyword id="KW-0963">Cytoplasm</keyword>
<keyword id="KW-0520">NAD</keyword>
<keyword id="KW-0560">Oxidoreductase</keyword>
<keyword id="KW-0664">Pyridoxine biosynthesis</keyword>
<accession>Q15QK3</accession>
<protein>
    <recommendedName>
        <fullName evidence="1">D-erythrose-4-phosphate dehydrogenase</fullName>
        <shortName evidence="1">E4PDH</shortName>
        <ecNumber evidence="1">1.2.1.72</ecNumber>
    </recommendedName>
</protein>
<gene>
    <name evidence="1" type="primary">epd</name>
    <name type="ordered locus">Patl_3329</name>
</gene>
<dbReference type="EC" id="1.2.1.72" evidence="1"/>
<dbReference type="EMBL" id="CP000388">
    <property type="protein sequence ID" value="ABG41835.1"/>
    <property type="molecule type" value="Genomic_DNA"/>
</dbReference>
<dbReference type="RefSeq" id="WP_011576065.1">
    <property type="nucleotide sequence ID" value="NC_008228.1"/>
</dbReference>
<dbReference type="SMR" id="Q15QK3"/>
<dbReference type="STRING" id="342610.Patl_3329"/>
<dbReference type="KEGG" id="pat:Patl_3329"/>
<dbReference type="eggNOG" id="COG0057">
    <property type="taxonomic scope" value="Bacteria"/>
</dbReference>
<dbReference type="HOGENOM" id="CLU_030140_0_0_6"/>
<dbReference type="OrthoDB" id="9803304at2"/>
<dbReference type="UniPathway" id="UPA00244">
    <property type="reaction ID" value="UER00309"/>
</dbReference>
<dbReference type="Proteomes" id="UP000001981">
    <property type="component" value="Chromosome"/>
</dbReference>
<dbReference type="GO" id="GO:0005737">
    <property type="term" value="C:cytoplasm"/>
    <property type="evidence" value="ECO:0007669"/>
    <property type="project" value="UniProtKB-SubCell"/>
</dbReference>
<dbReference type="GO" id="GO:0048001">
    <property type="term" value="F:erythrose-4-phosphate dehydrogenase activity"/>
    <property type="evidence" value="ECO:0007669"/>
    <property type="project" value="UniProtKB-UniRule"/>
</dbReference>
<dbReference type="GO" id="GO:0051287">
    <property type="term" value="F:NAD binding"/>
    <property type="evidence" value="ECO:0007669"/>
    <property type="project" value="InterPro"/>
</dbReference>
<dbReference type="GO" id="GO:0042823">
    <property type="term" value="P:pyridoxal phosphate biosynthetic process"/>
    <property type="evidence" value="ECO:0007669"/>
    <property type="project" value="UniProtKB-UniRule"/>
</dbReference>
<dbReference type="GO" id="GO:0008615">
    <property type="term" value="P:pyridoxine biosynthetic process"/>
    <property type="evidence" value="ECO:0007669"/>
    <property type="project" value="UniProtKB-UniRule"/>
</dbReference>
<dbReference type="CDD" id="cd23937">
    <property type="entry name" value="GAPDH_C_E4PDH"/>
    <property type="match status" value="1"/>
</dbReference>
<dbReference type="CDD" id="cd17892">
    <property type="entry name" value="GAPDH_N_E4PDH"/>
    <property type="match status" value="1"/>
</dbReference>
<dbReference type="FunFam" id="3.30.360.10:FF:000007">
    <property type="entry name" value="D-erythrose-4-phosphate dehydrogenase"/>
    <property type="match status" value="1"/>
</dbReference>
<dbReference type="FunFam" id="3.40.50.720:FF:000001">
    <property type="entry name" value="Glyceraldehyde-3-phosphate dehydrogenase"/>
    <property type="match status" value="1"/>
</dbReference>
<dbReference type="Gene3D" id="3.30.360.10">
    <property type="entry name" value="Dihydrodipicolinate Reductase, domain 2"/>
    <property type="match status" value="1"/>
</dbReference>
<dbReference type="Gene3D" id="3.40.50.720">
    <property type="entry name" value="NAD(P)-binding Rossmann-like Domain"/>
    <property type="match status" value="1"/>
</dbReference>
<dbReference type="HAMAP" id="MF_01640">
    <property type="entry name" value="E4P_dehydrog"/>
    <property type="match status" value="1"/>
</dbReference>
<dbReference type="InterPro" id="IPR006422">
    <property type="entry name" value="E4P_DH_bac"/>
</dbReference>
<dbReference type="InterPro" id="IPR020831">
    <property type="entry name" value="GlycerAld/Erythrose_P_DH"/>
</dbReference>
<dbReference type="InterPro" id="IPR020829">
    <property type="entry name" value="GlycerAld_3-P_DH_cat"/>
</dbReference>
<dbReference type="InterPro" id="IPR020828">
    <property type="entry name" value="GlycerAld_3-P_DH_NAD(P)-bd"/>
</dbReference>
<dbReference type="InterPro" id="IPR036291">
    <property type="entry name" value="NAD(P)-bd_dom_sf"/>
</dbReference>
<dbReference type="NCBIfam" id="TIGR01532">
    <property type="entry name" value="E4PD_g-proteo"/>
    <property type="match status" value="1"/>
</dbReference>
<dbReference type="NCBIfam" id="NF010058">
    <property type="entry name" value="PRK13535.1"/>
    <property type="match status" value="1"/>
</dbReference>
<dbReference type="PANTHER" id="PTHR43148">
    <property type="entry name" value="GLYCERALDEHYDE-3-PHOSPHATE DEHYDROGENASE 2"/>
    <property type="match status" value="1"/>
</dbReference>
<dbReference type="Pfam" id="PF02800">
    <property type="entry name" value="Gp_dh_C"/>
    <property type="match status" value="1"/>
</dbReference>
<dbReference type="Pfam" id="PF00044">
    <property type="entry name" value="Gp_dh_N"/>
    <property type="match status" value="1"/>
</dbReference>
<dbReference type="PIRSF" id="PIRSF000149">
    <property type="entry name" value="GAP_DH"/>
    <property type="match status" value="1"/>
</dbReference>
<dbReference type="PRINTS" id="PR00078">
    <property type="entry name" value="G3PDHDRGNASE"/>
</dbReference>
<dbReference type="SMART" id="SM00846">
    <property type="entry name" value="Gp_dh_N"/>
    <property type="match status" value="1"/>
</dbReference>
<dbReference type="SUPFAM" id="SSF55347">
    <property type="entry name" value="Glyceraldehyde-3-phosphate dehydrogenase-like, C-terminal domain"/>
    <property type="match status" value="1"/>
</dbReference>
<dbReference type="SUPFAM" id="SSF51735">
    <property type="entry name" value="NAD(P)-binding Rossmann-fold domains"/>
    <property type="match status" value="1"/>
</dbReference>
<feature type="chain" id="PRO_0000293153" description="D-erythrose-4-phosphate dehydrogenase">
    <location>
        <begin position="1"/>
        <end position="342"/>
    </location>
</feature>
<feature type="active site" description="Nucleophile" evidence="1">
    <location>
        <position position="154"/>
    </location>
</feature>
<feature type="binding site" evidence="1">
    <location>
        <begin position="11"/>
        <end position="12"/>
    </location>
    <ligand>
        <name>NAD(+)</name>
        <dbReference type="ChEBI" id="CHEBI:57540"/>
    </ligand>
</feature>
<feature type="binding site" evidence="1">
    <location>
        <begin position="153"/>
        <end position="155"/>
    </location>
    <ligand>
        <name>substrate</name>
    </ligand>
</feature>
<feature type="binding site" evidence="1">
    <location>
        <position position="199"/>
    </location>
    <ligand>
        <name>substrate</name>
    </ligand>
</feature>
<feature type="binding site" evidence="1">
    <location>
        <begin position="212"/>
        <end position="213"/>
    </location>
    <ligand>
        <name>substrate</name>
    </ligand>
</feature>
<feature type="binding site" evidence="1">
    <location>
        <position position="235"/>
    </location>
    <ligand>
        <name>substrate</name>
    </ligand>
</feature>
<feature type="binding site" evidence="1">
    <location>
        <position position="317"/>
    </location>
    <ligand>
        <name>NAD(+)</name>
        <dbReference type="ChEBI" id="CHEBI:57540"/>
    </ligand>
</feature>
<feature type="site" description="Activates thiol group during catalysis" evidence="1">
    <location>
        <position position="181"/>
    </location>
</feature>